<feature type="chain" id="PRO_0000152139" description="Leucine--tRNA ligase">
    <location>
        <begin position="1"/>
        <end position="967"/>
    </location>
</feature>
<feature type="short sequence motif" description="'HIGH' region">
    <location>
        <begin position="43"/>
        <end position="53"/>
    </location>
</feature>
<feature type="short sequence motif" description="'KMSKS' region">
    <location>
        <begin position="650"/>
        <end position="654"/>
    </location>
</feature>
<feature type="binding site" evidence="1">
    <location>
        <position position="653"/>
    </location>
    <ligand>
        <name>ATP</name>
        <dbReference type="ChEBI" id="CHEBI:30616"/>
    </ligand>
</feature>
<comment type="catalytic activity">
    <reaction evidence="1">
        <text>tRNA(Leu) + L-leucine + ATP = L-leucyl-tRNA(Leu) + AMP + diphosphate</text>
        <dbReference type="Rhea" id="RHEA:11688"/>
        <dbReference type="Rhea" id="RHEA-COMP:9613"/>
        <dbReference type="Rhea" id="RHEA-COMP:9622"/>
        <dbReference type="ChEBI" id="CHEBI:30616"/>
        <dbReference type="ChEBI" id="CHEBI:33019"/>
        <dbReference type="ChEBI" id="CHEBI:57427"/>
        <dbReference type="ChEBI" id="CHEBI:78442"/>
        <dbReference type="ChEBI" id="CHEBI:78494"/>
        <dbReference type="ChEBI" id="CHEBI:456215"/>
        <dbReference type="EC" id="6.1.1.4"/>
    </reaction>
</comment>
<comment type="subcellular location">
    <subcellularLocation>
        <location evidence="1">Cytoplasm</location>
    </subcellularLocation>
</comment>
<comment type="similarity">
    <text evidence="1">Belongs to the class-I aminoacyl-tRNA synthetase family.</text>
</comment>
<dbReference type="EC" id="6.1.1.4" evidence="1"/>
<dbReference type="EMBL" id="AE009950">
    <property type="protein sequence ID" value="AAL81014.1"/>
    <property type="molecule type" value="Genomic_DNA"/>
</dbReference>
<dbReference type="RefSeq" id="WP_011012025.1">
    <property type="nucleotide sequence ID" value="NZ_CP023154.1"/>
</dbReference>
<dbReference type="SMR" id="Q8U2E6"/>
<dbReference type="STRING" id="186497.PF0890"/>
<dbReference type="PaxDb" id="186497-PF0890"/>
<dbReference type="GeneID" id="41712698"/>
<dbReference type="KEGG" id="pfu:PF0890"/>
<dbReference type="PATRIC" id="fig|186497.12.peg.940"/>
<dbReference type="eggNOG" id="arCOG00809">
    <property type="taxonomic scope" value="Archaea"/>
</dbReference>
<dbReference type="HOGENOM" id="CLU_004174_0_0_2"/>
<dbReference type="OrthoDB" id="23906at2157"/>
<dbReference type="PhylomeDB" id="Q8U2E6"/>
<dbReference type="Proteomes" id="UP000001013">
    <property type="component" value="Chromosome"/>
</dbReference>
<dbReference type="GO" id="GO:0005737">
    <property type="term" value="C:cytoplasm"/>
    <property type="evidence" value="ECO:0007669"/>
    <property type="project" value="UniProtKB-SubCell"/>
</dbReference>
<dbReference type="GO" id="GO:0002161">
    <property type="term" value="F:aminoacyl-tRNA deacylase activity"/>
    <property type="evidence" value="ECO:0007669"/>
    <property type="project" value="InterPro"/>
</dbReference>
<dbReference type="GO" id="GO:0005524">
    <property type="term" value="F:ATP binding"/>
    <property type="evidence" value="ECO:0007669"/>
    <property type="project" value="UniProtKB-UniRule"/>
</dbReference>
<dbReference type="GO" id="GO:0004823">
    <property type="term" value="F:leucine-tRNA ligase activity"/>
    <property type="evidence" value="ECO:0007669"/>
    <property type="project" value="UniProtKB-UniRule"/>
</dbReference>
<dbReference type="GO" id="GO:0006429">
    <property type="term" value="P:leucyl-tRNA aminoacylation"/>
    <property type="evidence" value="ECO:0007669"/>
    <property type="project" value="UniProtKB-UniRule"/>
</dbReference>
<dbReference type="CDD" id="cd07959">
    <property type="entry name" value="Anticodon_Ia_Leu_AEc"/>
    <property type="match status" value="1"/>
</dbReference>
<dbReference type="CDD" id="cd00812">
    <property type="entry name" value="LeuRS_core"/>
    <property type="match status" value="1"/>
</dbReference>
<dbReference type="FunFam" id="1.10.730.10:FF:000051">
    <property type="entry name" value="Leucine--tRNA ligase"/>
    <property type="match status" value="1"/>
</dbReference>
<dbReference type="FunFam" id="3.90.740.10:FF:000024">
    <property type="entry name" value="Leucine--tRNA ligase"/>
    <property type="match status" value="1"/>
</dbReference>
<dbReference type="Gene3D" id="3.30.2320.20">
    <property type="entry name" value="Class I aminoacyl-tRNA synthetases (RS)"/>
    <property type="match status" value="1"/>
</dbReference>
<dbReference type="Gene3D" id="3.40.50.620">
    <property type="entry name" value="HUPs"/>
    <property type="match status" value="1"/>
</dbReference>
<dbReference type="Gene3D" id="1.10.730.10">
    <property type="entry name" value="Isoleucyl-tRNA Synthetase, Domain 1"/>
    <property type="match status" value="1"/>
</dbReference>
<dbReference type="Gene3D" id="1.10.10.720">
    <property type="entry name" value="leucyl-tRNA synthetase"/>
    <property type="match status" value="1"/>
</dbReference>
<dbReference type="Gene3D" id="3.90.740.10">
    <property type="entry name" value="Valyl/Leucyl/Isoleucyl-tRNA synthetase, editing domain"/>
    <property type="match status" value="1"/>
</dbReference>
<dbReference type="HAMAP" id="MF_00049_A">
    <property type="entry name" value="Leu_tRNA_synth_A"/>
    <property type="match status" value="1"/>
</dbReference>
<dbReference type="InterPro" id="IPR001412">
    <property type="entry name" value="aa-tRNA-synth_I_CS"/>
</dbReference>
<dbReference type="InterPro" id="IPR002300">
    <property type="entry name" value="aa-tRNA-synth_Ia"/>
</dbReference>
<dbReference type="InterPro" id="IPR020791">
    <property type="entry name" value="Leu-tRNA-lgase_arc"/>
</dbReference>
<dbReference type="InterPro" id="IPR004493">
    <property type="entry name" value="Leu-tRNA-synth_Ia_arc/euk"/>
</dbReference>
<dbReference type="InterPro" id="IPR013155">
    <property type="entry name" value="M/V/L/I-tRNA-synth_anticd-bd"/>
</dbReference>
<dbReference type="InterPro" id="IPR014729">
    <property type="entry name" value="Rossmann-like_a/b/a_fold"/>
</dbReference>
<dbReference type="InterPro" id="IPR009080">
    <property type="entry name" value="tRNAsynth_Ia_anticodon-bd"/>
</dbReference>
<dbReference type="InterPro" id="IPR009008">
    <property type="entry name" value="Val/Leu/Ile-tRNA-synth_edit"/>
</dbReference>
<dbReference type="NCBIfam" id="TIGR00395">
    <property type="entry name" value="leuS_arch"/>
    <property type="match status" value="1"/>
</dbReference>
<dbReference type="NCBIfam" id="NF008957">
    <property type="entry name" value="PRK12300.1"/>
    <property type="match status" value="1"/>
</dbReference>
<dbReference type="PANTHER" id="PTHR45794:SF1">
    <property type="entry name" value="LEUCINE--TRNA LIGASE, CYTOPLASMIC"/>
    <property type="match status" value="1"/>
</dbReference>
<dbReference type="PANTHER" id="PTHR45794">
    <property type="entry name" value="LEUCYL-TRNA SYNTHETASE"/>
    <property type="match status" value="1"/>
</dbReference>
<dbReference type="Pfam" id="PF08264">
    <property type="entry name" value="Anticodon_1"/>
    <property type="match status" value="1"/>
</dbReference>
<dbReference type="Pfam" id="PF00133">
    <property type="entry name" value="tRNA-synt_1"/>
    <property type="match status" value="1"/>
</dbReference>
<dbReference type="SUPFAM" id="SSF47323">
    <property type="entry name" value="Anticodon-binding domain of a subclass of class I aminoacyl-tRNA synthetases"/>
    <property type="match status" value="1"/>
</dbReference>
<dbReference type="SUPFAM" id="SSF52374">
    <property type="entry name" value="Nucleotidylyl transferase"/>
    <property type="match status" value="1"/>
</dbReference>
<dbReference type="SUPFAM" id="SSF50677">
    <property type="entry name" value="ValRS/IleRS/LeuRS editing domain"/>
    <property type="match status" value="1"/>
</dbReference>
<dbReference type="PROSITE" id="PS00178">
    <property type="entry name" value="AA_TRNA_LIGASE_I"/>
    <property type="match status" value="1"/>
</dbReference>
<reference key="1">
    <citation type="journal article" date="1999" name="Genetics">
        <title>Divergence of the hyperthermophilic archaea Pyrococcus furiosus and P. horikoshii inferred from complete genomic sequences.</title>
        <authorList>
            <person name="Maeder D.L."/>
            <person name="Weiss R.B."/>
            <person name="Dunn D.M."/>
            <person name="Cherry J.L."/>
            <person name="Gonzalez J.M."/>
            <person name="DiRuggiero J."/>
            <person name="Robb F.T."/>
        </authorList>
    </citation>
    <scope>NUCLEOTIDE SEQUENCE [LARGE SCALE GENOMIC DNA]</scope>
    <source>
        <strain>ATCC 43587 / DSM 3638 / JCM 8422 / Vc1</strain>
    </source>
</reference>
<gene>
    <name evidence="1" type="primary">leuS</name>
    <name type="ordered locus">PF0890</name>
</gene>
<keyword id="KW-0030">Aminoacyl-tRNA synthetase</keyword>
<keyword id="KW-0067">ATP-binding</keyword>
<keyword id="KW-0963">Cytoplasm</keyword>
<keyword id="KW-0436">Ligase</keyword>
<keyword id="KW-0547">Nucleotide-binding</keyword>
<keyword id="KW-0648">Protein biosynthesis</keyword>
<keyword id="KW-1185">Reference proteome</keyword>
<sequence>MPELNFKAIEEKWQKRWLEAKIFEPNIKDKPKEKKFYITVAFPYLSGHLHVGHARTYTIPDVIARFKRMQGYNVLFPMAWHITGSPIVGIAERIKNRDPQTIWIYRDVYKVPEDILWTFEDPVNIVKYFMKAAKETFIRAGFSVDWSREFYTTSLFPPFSKFIEWQFWKLKEKGYIVKGTHRVRWDPVVGTPLGDHDLMDGEDVPILEYILIKFELKEGEETVYLPAATLRPETVYGVTNMWLNPEATYVKAKVKKGDKVETWIISKEAAYKLSFQDREIEVVEEFKGEKLIGKFVRNPVTGDEVIILPAEFVDPDNATGVVMSVPAHAPFDHVALEDLKKQTDILLKYDIDPRIVENITYISLIKLEGYGEFPAVEEVQKLGVKSQKDKDKLEQATKTIYRAEYHKGIFKIPPYEGKPVSEVKELIAKDLMEKGIGEIMYEFAEKNVISRFGNRAVIKIIHDQWFIDYGNPEWKEKAREALKRMKILPESRRAQFEAIIEWLDKKACARKVGLGTPLPWDPDWVIESLSDSTIYMAYYTISRHINKLREEGKLDPEKLTPEFFDYIFLEEFDEKKEKELEEKTGISAEIIHEMKEEFEYWYPLDWRCSAKDLIPNHLTFFIFNHVAIFPEKHWPKGIAVNGFGTLEGQKMSKSKGNVLNFIDAIEENGADVVRLYIMSLAEHDSDFDWRRKEVGRLRKQIERFYELISQFAEYEARENVELKDIDKWMLHRLNKAIKGTTDALEEFRTRTAVQWAFYTIMNDLRWYLRRTEGRDDEAKRYVLRTLADIWVRLMAPFTPHICEELWEKLGGEGFVSLAKWPDPVEEWWNETIEAEEEYVKSVMEDIKEIIEVAKIENARRAYIYTAEDWKWKVVEVVAEKRDFKAAMSELMKDQELRKRGKEIAKIVERLIKDRAFEVKRIDEEKVLREAKDFIEKELGIEIIINPSEDKGGKKKQAMPLKPAIFIE</sequence>
<organism>
    <name type="scientific">Pyrococcus furiosus (strain ATCC 43587 / DSM 3638 / JCM 8422 / Vc1)</name>
    <dbReference type="NCBI Taxonomy" id="186497"/>
    <lineage>
        <taxon>Archaea</taxon>
        <taxon>Methanobacteriati</taxon>
        <taxon>Methanobacteriota</taxon>
        <taxon>Thermococci</taxon>
        <taxon>Thermococcales</taxon>
        <taxon>Thermococcaceae</taxon>
        <taxon>Pyrococcus</taxon>
    </lineage>
</organism>
<name>SYL_PYRFU</name>
<protein>
    <recommendedName>
        <fullName evidence="1">Leucine--tRNA ligase</fullName>
        <ecNumber evidence="1">6.1.1.4</ecNumber>
    </recommendedName>
    <alternativeName>
        <fullName evidence="1">Leucyl-tRNA synthetase</fullName>
        <shortName evidence="1">LeuRS</shortName>
    </alternativeName>
</protein>
<proteinExistence type="inferred from homology"/>
<evidence type="ECO:0000255" key="1">
    <source>
        <dbReference type="HAMAP-Rule" id="MF_00049"/>
    </source>
</evidence>
<accession>Q8U2E6</accession>